<name>PRRX1_CHICK</name>
<reference key="1">
    <citation type="journal article" date="1993" name="Dev. Biol.">
        <title>A chicken homeobox gene related to Drosophila paired is predominantly expressed in the developing limb.</title>
        <authorList>
            <person name="Nohno T."/>
            <person name="Koyama E."/>
            <person name="Myokai F."/>
            <person name="Taniguchi S."/>
            <person name="Ohuchi H."/>
            <person name="Saito T."/>
            <person name="Noji S."/>
        </authorList>
    </citation>
    <scope>NUCLEOTIDE SEQUENCE [MRNA]</scope>
    <source>
        <tissue>Limb bud</tissue>
    </source>
</reference>
<reference key="2">
    <citation type="journal article" date="1994" name="Dev. Biol.">
        <title>The expression pattern of the chick homeobox gene gMHox suggests a role in patterning of the limbs and face and in compartmentalization of somites.</title>
        <authorList>
            <person name="Kuratani S."/>
            <person name="Martin J.F."/>
            <person name="Wawersik S."/>
            <person name="Lilly B."/>
            <person name="Eichele G."/>
            <person name="Olson E.N."/>
        </authorList>
    </citation>
    <scope>NUCLEOTIDE SEQUENCE [MRNA]</scope>
    <source>
        <tissue>Embryonic heart</tissue>
    </source>
</reference>
<reference key="3">
    <citation type="journal article" date="1995" name="Mech. Dev.">
        <title>Expression patterns of the paired-related homeobox genes MHox/Prx1 and S8/Prx2 suggest roles in development of the heart and the forebrain.</title>
        <authorList>
            <person name="Leussink B."/>
            <person name="Brouwer A."/>
            <person name="el Khattabi M."/>
            <person name="Poelmann R.E."/>
            <person name="Gittenberger-De Groot A.C."/>
            <person name="Meijlink F."/>
        </authorList>
    </citation>
    <scope>DEVELOPMENTAL STAGE</scope>
</reference>
<reference key="4">
    <citation type="journal article" date="2001" name="J. Biol. Chem.">
        <title>A set of Hox proteins interact with the Maf oncoprotein to inhibit its DNA binding, transactivation, and transforming activities.</title>
        <authorList>
            <person name="Kataoka K."/>
            <person name="Yoshitomo-Nakagawa K."/>
            <person name="Shioda S."/>
            <person name="Nishizawa M."/>
        </authorList>
    </citation>
    <scope>INTERACTION WITH MAF AND MAFB</scope>
</reference>
<dbReference type="EMBL" id="D13433">
    <property type="protein sequence ID" value="BAA02695.1"/>
    <property type="molecule type" value="mRNA"/>
</dbReference>
<dbReference type="EMBL" id="S69088">
    <property type="protein sequence ID" value="AAB29880.1"/>
    <property type="molecule type" value="mRNA"/>
</dbReference>
<dbReference type="PIR" id="I51226">
    <property type="entry name" value="I51226"/>
</dbReference>
<dbReference type="RefSeq" id="NP_001007822.1">
    <property type="nucleotide sequence ID" value="NM_001007821.1"/>
</dbReference>
<dbReference type="RefSeq" id="NP_001264653.1">
    <property type="nucleotide sequence ID" value="NM_001277724.3"/>
</dbReference>
<dbReference type="SMR" id="Q05437"/>
<dbReference type="FunCoup" id="Q05437">
    <property type="interactions" value="4"/>
</dbReference>
<dbReference type="MINT" id="Q05437"/>
<dbReference type="STRING" id="9031.ENSGALP00000005255"/>
<dbReference type="PaxDb" id="9031-ENSGALP00000005255"/>
<dbReference type="Ensembl" id="ENSGALT00010033773.1">
    <property type="protein sequence ID" value="ENSGALP00010019870.1"/>
    <property type="gene ID" value="ENSGALG00010014076.1"/>
</dbReference>
<dbReference type="GeneID" id="373941"/>
<dbReference type="KEGG" id="gga:373941"/>
<dbReference type="CTD" id="5396"/>
<dbReference type="VEuPathDB" id="HostDB:geneid_373941"/>
<dbReference type="eggNOG" id="KOG0490">
    <property type="taxonomic scope" value="Eukaryota"/>
</dbReference>
<dbReference type="GeneTree" id="ENSGT00940000159466"/>
<dbReference type="InParanoid" id="Q05437"/>
<dbReference type="OMA" id="SCALANH"/>
<dbReference type="OrthoDB" id="6159439at2759"/>
<dbReference type="PhylomeDB" id="Q05437"/>
<dbReference type="PRO" id="PR:Q05437"/>
<dbReference type="Proteomes" id="UP000000539">
    <property type="component" value="Chromosome 8"/>
</dbReference>
<dbReference type="Bgee" id="ENSGALG00000003324">
    <property type="expression patterns" value="Expressed in ovary and 6 other cell types or tissues"/>
</dbReference>
<dbReference type="GO" id="GO:0005829">
    <property type="term" value="C:cytosol"/>
    <property type="evidence" value="ECO:0007669"/>
    <property type="project" value="Ensembl"/>
</dbReference>
<dbReference type="GO" id="GO:0005654">
    <property type="term" value="C:nucleoplasm"/>
    <property type="evidence" value="ECO:0007669"/>
    <property type="project" value="Ensembl"/>
</dbReference>
<dbReference type="GO" id="GO:0005634">
    <property type="term" value="C:nucleus"/>
    <property type="evidence" value="ECO:0000318"/>
    <property type="project" value="GO_Central"/>
</dbReference>
<dbReference type="GO" id="GO:0001228">
    <property type="term" value="F:DNA-binding transcription activator activity, RNA polymerase II-specific"/>
    <property type="evidence" value="ECO:0007669"/>
    <property type="project" value="Ensembl"/>
</dbReference>
<dbReference type="GO" id="GO:0000981">
    <property type="term" value="F:DNA-binding transcription factor activity, RNA polymerase II-specific"/>
    <property type="evidence" value="ECO:0000318"/>
    <property type="project" value="GO_Central"/>
</dbReference>
<dbReference type="GO" id="GO:0001227">
    <property type="term" value="F:DNA-binding transcription repressor activity, RNA polymerase II-specific"/>
    <property type="evidence" value="ECO:0007669"/>
    <property type="project" value="Ensembl"/>
</dbReference>
<dbReference type="GO" id="GO:0071837">
    <property type="term" value="F:HMG box domain binding"/>
    <property type="evidence" value="ECO:0007669"/>
    <property type="project" value="Ensembl"/>
</dbReference>
<dbReference type="GO" id="GO:0000978">
    <property type="term" value="F:RNA polymerase II cis-regulatory region sequence-specific DNA binding"/>
    <property type="evidence" value="ECO:0000318"/>
    <property type="project" value="GO_Central"/>
</dbReference>
<dbReference type="GO" id="GO:0016251">
    <property type="term" value="F:RNA polymerase II general transcription initiation factor activity"/>
    <property type="evidence" value="ECO:0007669"/>
    <property type="project" value="Ensembl"/>
</dbReference>
<dbReference type="GO" id="GO:0061629">
    <property type="term" value="F:RNA polymerase II-specific DNA-binding transcription factor binding"/>
    <property type="evidence" value="ECO:0007669"/>
    <property type="project" value="Ensembl"/>
</dbReference>
<dbReference type="GO" id="GO:0048844">
    <property type="term" value="P:artery morphogenesis"/>
    <property type="evidence" value="ECO:0007669"/>
    <property type="project" value="Ensembl"/>
</dbReference>
<dbReference type="GO" id="GO:0051216">
    <property type="term" value="P:cartilage development"/>
    <property type="evidence" value="ECO:0007669"/>
    <property type="project" value="Ensembl"/>
</dbReference>
<dbReference type="GO" id="GO:0048701">
    <property type="term" value="P:embryonic cranial skeleton morphogenesis"/>
    <property type="evidence" value="ECO:0007669"/>
    <property type="project" value="Ensembl"/>
</dbReference>
<dbReference type="GO" id="GO:0030326">
    <property type="term" value="P:embryonic limb morphogenesis"/>
    <property type="evidence" value="ECO:0007669"/>
    <property type="project" value="Ensembl"/>
</dbReference>
<dbReference type="GO" id="GO:0042472">
    <property type="term" value="P:inner ear morphogenesis"/>
    <property type="evidence" value="ECO:0007669"/>
    <property type="project" value="Ensembl"/>
</dbReference>
<dbReference type="GO" id="GO:0010463">
    <property type="term" value="P:mesenchymal cell proliferation"/>
    <property type="evidence" value="ECO:0007669"/>
    <property type="project" value="Ensembl"/>
</dbReference>
<dbReference type="GO" id="GO:0042474">
    <property type="term" value="P:middle ear morphogenesis"/>
    <property type="evidence" value="ECO:0007669"/>
    <property type="project" value="Ensembl"/>
</dbReference>
<dbReference type="GO" id="GO:0048664">
    <property type="term" value="P:neuron fate determination"/>
    <property type="evidence" value="ECO:0007669"/>
    <property type="project" value="Ensembl"/>
</dbReference>
<dbReference type="GO" id="GO:0097150">
    <property type="term" value="P:neuronal stem cell population maintenance"/>
    <property type="evidence" value="ECO:0007669"/>
    <property type="project" value="Ensembl"/>
</dbReference>
<dbReference type="GO" id="GO:0002053">
    <property type="term" value="P:positive regulation of mesenchymal cell proliferation"/>
    <property type="evidence" value="ECO:0007669"/>
    <property type="project" value="Ensembl"/>
</dbReference>
<dbReference type="GO" id="GO:0045880">
    <property type="term" value="P:positive regulation of smoothened signaling pathway"/>
    <property type="evidence" value="ECO:0007669"/>
    <property type="project" value="Ensembl"/>
</dbReference>
<dbReference type="GO" id="GO:2000648">
    <property type="term" value="P:positive regulation of stem cell proliferation"/>
    <property type="evidence" value="ECO:0007669"/>
    <property type="project" value="Ensembl"/>
</dbReference>
<dbReference type="GO" id="GO:0070570">
    <property type="term" value="P:regulation of neuron projection regeneration"/>
    <property type="evidence" value="ECO:0007669"/>
    <property type="project" value="Ensembl"/>
</dbReference>
<dbReference type="GO" id="GO:0006357">
    <property type="term" value="P:regulation of transcription by RNA polymerase II"/>
    <property type="evidence" value="ECO:0000318"/>
    <property type="project" value="GO_Central"/>
</dbReference>
<dbReference type="GO" id="GO:0060021">
    <property type="term" value="P:roof of mouth development"/>
    <property type="evidence" value="ECO:0007669"/>
    <property type="project" value="Ensembl"/>
</dbReference>
<dbReference type="GO" id="GO:0007224">
    <property type="term" value="P:smoothened signaling pathway"/>
    <property type="evidence" value="ECO:0007669"/>
    <property type="project" value="Ensembl"/>
</dbReference>
<dbReference type="GO" id="GO:0072089">
    <property type="term" value="P:stem cell proliferation"/>
    <property type="evidence" value="ECO:0007669"/>
    <property type="project" value="Ensembl"/>
</dbReference>
<dbReference type="CDD" id="cd00086">
    <property type="entry name" value="homeodomain"/>
    <property type="match status" value="1"/>
</dbReference>
<dbReference type="FunFam" id="1.10.10.60:FF:000066">
    <property type="entry name" value="Paired mesoderm homeobox protein 1"/>
    <property type="match status" value="1"/>
</dbReference>
<dbReference type="Gene3D" id="1.10.10.60">
    <property type="entry name" value="Homeodomain-like"/>
    <property type="match status" value="1"/>
</dbReference>
<dbReference type="InterPro" id="IPR001356">
    <property type="entry name" value="HD"/>
</dbReference>
<dbReference type="InterPro" id="IPR017970">
    <property type="entry name" value="Homeobox_CS"/>
</dbReference>
<dbReference type="InterPro" id="IPR009057">
    <property type="entry name" value="Homeodomain-like_sf"/>
</dbReference>
<dbReference type="InterPro" id="IPR003654">
    <property type="entry name" value="OAR_dom"/>
</dbReference>
<dbReference type="InterPro" id="IPR043378">
    <property type="entry name" value="PRRX1/2"/>
</dbReference>
<dbReference type="PANTHER" id="PTHR46385:SF1">
    <property type="entry name" value="PAIRED MESODERM HOMEOBOX PROTEIN 1"/>
    <property type="match status" value="1"/>
</dbReference>
<dbReference type="PANTHER" id="PTHR46385">
    <property type="entry name" value="PAIRED MESODERM HOMEOBOX PROTEIN 1-RELATED"/>
    <property type="match status" value="1"/>
</dbReference>
<dbReference type="Pfam" id="PF00046">
    <property type="entry name" value="Homeodomain"/>
    <property type="match status" value="1"/>
</dbReference>
<dbReference type="Pfam" id="PF03826">
    <property type="entry name" value="OAR"/>
    <property type="match status" value="1"/>
</dbReference>
<dbReference type="SMART" id="SM00389">
    <property type="entry name" value="HOX"/>
    <property type="match status" value="1"/>
</dbReference>
<dbReference type="SUPFAM" id="SSF46689">
    <property type="entry name" value="Homeodomain-like"/>
    <property type="match status" value="1"/>
</dbReference>
<dbReference type="PROSITE" id="PS00027">
    <property type="entry name" value="HOMEOBOX_1"/>
    <property type="match status" value="1"/>
</dbReference>
<dbReference type="PROSITE" id="PS50071">
    <property type="entry name" value="HOMEOBOX_2"/>
    <property type="match status" value="1"/>
</dbReference>
<dbReference type="PROSITE" id="PS50803">
    <property type="entry name" value="OAR"/>
    <property type="match status" value="1"/>
</dbReference>
<accession>Q05437</accession>
<accession>Q91368</accession>
<evidence type="ECO:0000255" key="1">
    <source>
        <dbReference type="PROSITE-ProRule" id="PRU00108"/>
    </source>
</evidence>
<evidence type="ECO:0000255" key="2">
    <source>
        <dbReference type="PROSITE-ProRule" id="PRU00138"/>
    </source>
</evidence>
<evidence type="ECO:0000256" key="3">
    <source>
        <dbReference type="SAM" id="MobiDB-lite"/>
    </source>
</evidence>
<evidence type="ECO:0000269" key="4">
    <source>
    </source>
</evidence>
<evidence type="ECO:0000269" key="5">
    <source>
    </source>
</evidence>
<evidence type="ECO:0000305" key="6"/>
<sequence>MASSYAHAMERQALLPARLDGPAGLDNLQAKKNFSVSHLLDLEEAGDMVAAQGDEGGGEPGRSLLESPGLTSGSDTPQQDNDQLNSEEKKKRKQRRNRTTFNSSQLQALERVFERTHYPDAFVREDLARRVNLTEARVQVWFQNRRAKFRRNERAMLASKNASLLKSYSGDVTAVEQPIVPRPAPRPTDYLSWGTASPYSAMATYSTTCTNASPAQGMNMANSIANLRLKAKEYSLQRNQVPTVN</sequence>
<proteinExistence type="evidence at protein level"/>
<organism>
    <name type="scientific">Gallus gallus</name>
    <name type="common">Chicken</name>
    <dbReference type="NCBI Taxonomy" id="9031"/>
    <lineage>
        <taxon>Eukaryota</taxon>
        <taxon>Metazoa</taxon>
        <taxon>Chordata</taxon>
        <taxon>Craniata</taxon>
        <taxon>Vertebrata</taxon>
        <taxon>Euteleostomi</taxon>
        <taxon>Archelosauria</taxon>
        <taxon>Archosauria</taxon>
        <taxon>Dinosauria</taxon>
        <taxon>Saurischia</taxon>
        <taxon>Theropoda</taxon>
        <taxon>Coelurosauria</taxon>
        <taxon>Aves</taxon>
        <taxon>Neognathae</taxon>
        <taxon>Galloanserae</taxon>
        <taxon>Galliformes</taxon>
        <taxon>Phasianidae</taxon>
        <taxon>Phasianinae</taxon>
        <taxon>Gallus</taxon>
    </lineage>
</organism>
<comment type="function">
    <text>May participate in maintenance of mesenchymal cell lineages derived from both mesoderm and the neural crest and in patterning of the limbs and the face.</text>
</comment>
<comment type="subunit">
    <text evidence="4">Interacts with MAF and MAFB.</text>
</comment>
<comment type="subcellular location">
    <subcellularLocation>
        <location>Nucleus</location>
    </subcellularLocation>
</comment>
<comment type="tissue specificity">
    <text>Expressed predominantly in the mesodermal cells of the limb bud, visceral arches and craniofacial process, and at lower levels, in cranial mesenchyme, upper and lower eyelids, somites and cartilage of vertebra. Also found in the heart, especially the developing semilunar and atrioventricular valves and in the brain, in a distinct region of the ventral part of the hypothalamus as well as in a broader region of the telencephalon.</text>
</comment>
<comment type="developmental stage">
    <text evidence="5">At stage 10, expressed in the neural tube throughout the mesoderm. By early stage 13, expression becomes restricted to the lateral mesoderm in the trunk region and in the cranial region, to the dermomyotome, to the somatic mseoderm-derived pericardium and to a group of cells located ventral to the dermomyotome. Expression continues at high levels in the dermatome. In later stages, high expression found in the limb bud mesenchyme pharyngeal arches, the maxillary arches and the frontonasal mass and to a lesser extent, in the aorta, cardiac valve mesenchyme, the pericardial wall and the ventral foregut wall.</text>
</comment>
<comment type="similarity">
    <text evidence="6">Belongs to the paired homeobox family.</text>
</comment>
<protein>
    <recommendedName>
        <fullName>Paired mesoderm homeobox protein 1</fullName>
    </recommendedName>
    <alternativeName>
        <fullName>GMHOX</fullName>
    </alternativeName>
    <alternativeName>
        <fullName>Homeobox protein MHOX</fullName>
    </alternativeName>
    <alternativeName>
        <fullName>Paired-related homeobox protein 1</fullName>
        <shortName>PRX-1</shortName>
    </alternativeName>
</protein>
<keyword id="KW-0217">Developmental protein</keyword>
<keyword id="KW-0238">DNA-binding</keyword>
<keyword id="KW-0371">Homeobox</keyword>
<keyword id="KW-0539">Nucleus</keyword>
<keyword id="KW-1185">Reference proteome</keyword>
<feature type="chain" id="PRO_0000049254" description="Paired mesoderm homeobox protein 1">
    <location>
        <begin position="1"/>
        <end position="245"/>
    </location>
</feature>
<feature type="DNA-binding region" description="Homeobox" evidence="1">
    <location>
        <begin position="94"/>
        <end position="153"/>
    </location>
</feature>
<feature type="region of interest" description="Disordered" evidence="3">
    <location>
        <begin position="50"/>
        <end position="103"/>
    </location>
</feature>
<feature type="short sequence motif" description="OAR" evidence="2">
    <location>
        <begin position="222"/>
        <end position="235"/>
    </location>
</feature>
<feature type="compositionally biased region" description="Polar residues" evidence="3">
    <location>
        <begin position="69"/>
        <end position="84"/>
    </location>
</feature>
<feature type="sequence conflict" description="In Ref. 1; BAA02695." evidence="6" ref="1">
    <location>
        <position position="155"/>
    </location>
</feature>
<gene>
    <name type="primary">PRRX1</name>
    <name type="synonym">MHOX</name>
    <name type="synonym">PMX1</name>
    <name type="synonym">PRX1</name>
</gene>